<protein>
    <recommendedName>
        <fullName>Kunitz-type serine protease inhibitor 3</fullName>
    </recommendedName>
    <alternativeName>
        <fullName>Venom basic protease inhibitor 3</fullName>
    </alternativeName>
    <alternativeName>
        <fullName>Venom chymotrypsin inhibitor</fullName>
        <shortName>cVamChi</shortName>
    </alternativeName>
</protein>
<dbReference type="EMBL" id="AY217782">
    <property type="protein sequence ID" value="AAP04485.1"/>
    <property type="molecule type" value="mRNA"/>
</dbReference>
<dbReference type="PIR" id="A01223">
    <property type="entry name" value="TIVIVC"/>
</dbReference>
<dbReference type="SMR" id="P00992"/>
<dbReference type="MEROPS" id="I02.062"/>
<dbReference type="GO" id="GO:0005615">
    <property type="term" value="C:extracellular space"/>
    <property type="evidence" value="ECO:0007669"/>
    <property type="project" value="TreeGrafter"/>
</dbReference>
<dbReference type="GO" id="GO:0004867">
    <property type="term" value="F:serine-type endopeptidase inhibitor activity"/>
    <property type="evidence" value="ECO:0007669"/>
    <property type="project" value="UniProtKB-KW"/>
</dbReference>
<dbReference type="CDD" id="cd22608">
    <property type="entry name" value="Kunitz_PPTI-like"/>
    <property type="match status" value="1"/>
</dbReference>
<dbReference type="FunFam" id="4.10.410.10:FF:000021">
    <property type="entry name" value="Serine protease inhibitor, putative"/>
    <property type="match status" value="1"/>
</dbReference>
<dbReference type="Gene3D" id="4.10.410.10">
    <property type="entry name" value="Pancreatic trypsin inhibitor Kunitz domain"/>
    <property type="match status" value="1"/>
</dbReference>
<dbReference type="InterPro" id="IPR002223">
    <property type="entry name" value="Kunitz_BPTI"/>
</dbReference>
<dbReference type="InterPro" id="IPR036880">
    <property type="entry name" value="Kunitz_BPTI_sf"/>
</dbReference>
<dbReference type="InterPro" id="IPR020901">
    <property type="entry name" value="Prtase_inh_Kunz-CS"/>
</dbReference>
<dbReference type="InterPro" id="IPR050098">
    <property type="entry name" value="TFPI/VKTCI-like"/>
</dbReference>
<dbReference type="PANTHER" id="PTHR10083:SF383">
    <property type="entry name" value="BPTI_KUNITZ INHIBITOR DOMAIN-CONTAINING PROTEIN"/>
    <property type="match status" value="1"/>
</dbReference>
<dbReference type="PANTHER" id="PTHR10083">
    <property type="entry name" value="KUNITZ-TYPE PROTEASE INHIBITOR-RELATED"/>
    <property type="match status" value="1"/>
</dbReference>
<dbReference type="Pfam" id="PF00014">
    <property type="entry name" value="Kunitz_BPTI"/>
    <property type="match status" value="1"/>
</dbReference>
<dbReference type="PRINTS" id="PR00759">
    <property type="entry name" value="BASICPTASE"/>
</dbReference>
<dbReference type="SMART" id="SM00131">
    <property type="entry name" value="KU"/>
    <property type="match status" value="1"/>
</dbReference>
<dbReference type="SUPFAM" id="SSF57362">
    <property type="entry name" value="BPTI-like"/>
    <property type="match status" value="1"/>
</dbReference>
<dbReference type="PROSITE" id="PS00280">
    <property type="entry name" value="BPTI_KUNITZ_1"/>
    <property type="match status" value="1"/>
</dbReference>
<dbReference type="PROSITE" id="PS50279">
    <property type="entry name" value="BPTI_KUNITZ_2"/>
    <property type="match status" value="1"/>
</dbReference>
<evidence type="ECO:0000250" key="1"/>
<evidence type="ECO:0000255" key="2">
    <source>
        <dbReference type="PROSITE-ProRule" id="PRU00031"/>
    </source>
</evidence>
<evidence type="ECO:0000269" key="3">
    <source>
    </source>
</evidence>
<evidence type="ECO:0000269" key="4">
    <source ref="2"/>
</evidence>
<evidence type="ECO:0000305" key="5"/>
<evidence type="ECO:0000305" key="6">
    <source>
    </source>
</evidence>
<sequence>MSSGGLLLLLGLLTLWAELTPVSTRDRPKFCYLPADPGRCLAYMPSFYYDSASNKCKKFIYGGCRGNANNFKTWDECRHTCVASGIQPRIASN</sequence>
<accession>P00992</accession>
<accession>Q6XPY7</accession>
<organism>
    <name type="scientific">Vipera ammodytes ammodytes</name>
    <name type="common">Western sand viper</name>
    <dbReference type="NCBI Taxonomy" id="8705"/>
    <lineage>
        <taxon>Eukaryota</taxon>
        <taxon>Metazoa</taxon>
        <taxon>Chordata</taxon>
        <taxon>Craniata</taxon>
        <taxon>Vertebrata</taxon>
        <taxon>Euteleostomi</taxon>
        <taxon>Lepidosauria</taxon>
        <taxon>Squamata</taxon>
        <taxon>Bifurcata</taxon>
        <taxon>Unidentata</taxon>
        <taxon>Episquamata</taxon>
        <taxon>Toxicofera</taxon>
        <taxon>Serpentes</taxon>
        <taxon>Colubroidea</taxon>
        <taxon>Viperidae</taxon>
        <taxon>Viperinae</taxon>
        <taxon>Vipera</taxon>
    </lineage>
</organism>
<feature type="signal peptide" evidence="4">
    <location>
        <begin position="1"/>
        <end position="24"/>
    </location>
</feature>
<feature type="chain" id="PRO_0000155445" description="Kunitz-type serine protease inhibitor 3">
    <location>
        <begin position="25"/>
        <end position="89"/>
    </location>
</feature>
<feature type="propeptide" id="PRO_0000377479">
    <location>
        <begin position="90"/>
        <end position="93"/>
    </location>
</feature>
<feature type="domain" description="BPTI/Kunitz inhibitor" evidence="2">
    <location>
        <begin position="31"/>
        <end position="81"/>
    </location>
</feature>
<feature type="site" description="Reactive bond for chymotrypsin" evidence="1">
    <location>
        <begin position="41"/>
        <end position="42"/>
    </location>
</feature>
<feature type="disulfide bond" evidence="2 4">
    <location>
        <begin position="31"/>
        <end position="81"/>
    </location>
</feature>
<feature type="disulfide bond" evidence="2 4">
    <location>
        <begin position="40"/>
        <end position="64"/>
    </location>
</feature>
<feature type="disulfide bond" evidence="2 4">
    <location>
        <begin position="56"/>
        <end position="77"/>
    </location>
</feature>
<feature type="sequence conflict" description="In Ref. 2; AA sequence." evidence="5" ref="2">
    <original>S</original>
    <variation>R</variation>
    <location>
        <position position="46"/>
    </location>
</feature>
<feature type="sequence conflict" description="In Ref. 2; AA sequence." evidence="5" ref="2">
    <original>DS</original>
    <variation>NP</variation>
    <location>
        <begin position="50"/>
        <end position="51"/>
    </location>
</feature>
<feature type="sequence conflict" description="In Ref. 2; AA sequence." evidence="5" ref="2">
    <original>K</original>
    <variation>E</variation>
    <location>
        <position position="57"/>
    </location>
</feature>
<proteinExistence type="evidence at protein level"/>
<comment type="function">
    <text evidence="3 4">Serine protease inhibitor that principally inhibits alpha-chymotrypsin (Ki=4.3 nM). Shows weak inhibition on trypsin (Ki=5100 nM), and plasma kallikrein.</text>
</comment>
<comment type="subcellular location">
    <subcellularLocation>
        <location evidence="4">Secreted</location>
    </subcellularLocation>
</comment>
<comment type="tissue specificity">
    <text evidence="4">Expressed by the venom gland.</text>
</comment>
<comment type="miscellaneous">
    <text evidence="6">Negative results: does not inhibit plasmin, and pancreatic kallikrein.</text>
</comment>
<comment type="similarity">
    <text evidence="5">Belongs to the venom Kunitz-type family.</text>
</comment>
<reference key="1">
    <citation type="journal article" date="2003" name="FEBS Lett.">
        <title>Adaptive evolution in the snake venom Kunitz/BPTI protein family.</title>
        <authorList>
            <person name="Zupunski V."/>
            <person name="Kordis D."/>
            <person name="Gubensek F."/>
        </authorList>
    </citation>
    <scope>NUCLEOTIDE SEQUENCE [MRNA]</scope>
    <source>
        <tissue>Venom gland</tissue>
    </source>
</reference>
<reference key="2">
    <citation type="journal article" date="1983" name="Biochim. Biophys. Acta">
        <title>The primary structure of Vipera ammodytes venom chymotrypsin inhibitor.</title>
        <authorList>
            <person name="Ritonja A."/>
            <person name="Meloun B."/>
            <person name="Gubensek F."/>
        </authorList>
    </citation>
    <scope>PROTEIN SEQUENCE OF 25-89</scope>
    <scope>FUNCTION</scope>
    <scope>SUBCELLULAR LOCATION</scope>
    <scope>TISSUE SPECIFICITY</scope>
    <scope>DISULFIDE BONDS</scope>
    <source>
        <tissue>Venom</tissue>
    </source>
</reference>
<reference key="3">
    <citation type="journal article" date="1983" name="Eur. J. Biochem.">
        <title>Serine proteinase inhibitors from Vipera ammodytes venom. Isolation and kinetic studies.</title>
        <authorList>
            <person name="Ritonja A."/>
            <person name="Turk V."/>
            <person name="Gubensek F."/>
        </authorList>
    </citation>
    <scope>AMINO-ACID COMPOSITION</scope>
    <scope>FUNCTION</scope>
    <source>
        <tissue>Venom</tissue>
    </source>
</reference>
<name>VKT3_VIPAA</name>
<keyword id="KW-0903">Direct protein sequencing</keyword>
<keyword id="KW-1015">Disulfide bond</keyword>
<keyword id="KW-0646">Protease inhibitor</keyword>
<keyword id="KW-0964">Secreted</keyword>
<keyword id="KW-0722">Serine protease inhibitor</keyword>
<keyword id="KW-0732">Signal</keyword>